<sequence length="528" mass="60421">MNNNNNNRGRFPPGIGAAGPGPDPNFQSRNPNPPQPQQYLQSRTPFPQQPQPQPPQYLQSQSDAQQYVQRGYPQQIQQQQQLQQQQQQQQQQQEQQWSRRAQLPGDPSYIDEVEKTVQSEAISDSNNEDWKATLKLPPRDNRYQTEDVTATKGNEFEDYFLKRDLLRGIYEKGFEKPSPIQEESIPIALTGSDILARAKNGTGKTGAFCIPTLEKIDPENNVIQAVILVPTRELALQTSQVCKELSKYLKIEVMVTTGGTSLRDDIMRLYQPVHLLVGTPGRILDLAKKGVCVLKDCAMLVMDEADKLLSVEFQPSIEELIQFLPESRQILMFSATFPVTVKSFKDRYLKKPYIINLMDQLTLMGVTQYYAFVEERQKVHCLNTLFSKLQINQSIIFCNSVNRVELLAKKITELGYSCFYIHAKMVQDHRNRVFHDFRNGACRNLVCTDLFTRGIDIQAVNVVINFDFPRTSESYLHRVGRSGRFGHLGLAVNLVTYEDRFKMYQTEQELGTEIKPIPSLIDKAIYCQ</sequence>
<dbReference type="EC" id="3.6.4.13"/>
<dbReference type="EMBL" id="AC004665">
    <property type="protein sequence ID" value="AAC28543.1"/>
    <property type="molecule type" value="Genomic_DNA"/>
</dbReference>
<dbReference type="EMBL" id="CP002685">
    <property type="protein sequence ID" value="AEC10604.1"/>
    <property type="molecule type" value="Genomic_DNA"/>
</dbReference>
<dbReference type="EMBL" id="AY039862">
    <property type="protein sequence ID" value="AAK63966.1"/>
    <property type="molecule type" value="mRNA"/>
</dbReference>
<dbReference type="EMBL" id="BT002709">
    <property type="protein sequence ID" value="AAO11625.1"/>
    <property type="molecule type" value="mRNA"/>
</dbReference>
<dbReference type="EMBL" id="AJ010459">
    <property type="protein sequence ID" value="CAA09198.1"/>
    <property type="molecule type" value="mRNA"/>
</dbReference>
<dbReference type="PIR" id="T02466">
    <property type="entry name" value="T02466"/>
</dbReference>
<dbReference type="PIR" id="T51740">
    <property type="entry name" value="T51740"/>
</dbReference>
<dbReference type="RefSeq" id="NP_182105.1">
    <property type="nucleotide sequence ID" value="NM_130144.4"/>
</dbReference>
<dbReference type="SMR" id="Q94BV4"/>
<dbReference type="BioGRID" id="4525">
    <property type="interactions" value="2"/>
</dbReference>
<dbReference type="FunCoup" id="Q94BV4">
    <property type="interactions" value="4779"/>
</dbReference>
<dbReference type="IntAct" id="Q94BV4">
    <property type="interactions" value="1"/>
</dbReference>
<dbReference type="STRING" id="3702.Q94BV4"/>
<dbReference type="iPTMnet" id="Q94BV4"/>
<dbReference type="PaxDb" id="3702-AT2G45810.1"/>
<dbReference type="ProteomicsDB" id="236948"/>
<dbReference type="EnsemblPlants" id="AT2G45810.1">
    <property type="protein sequence ID" value="AT2G45810.1"/>
    <property type="gene ID" value="AT2G45810"/>
</dbReference>
<dbReference type="GeneID" id="819189"/>
<dbReference type="Gramene" id="AT2G45810.1">
    <property type="protein sequence ID" value="AT2G45810.1"/>
    <property type="gene ID" value="AT2G45810"/>
</dbReference>
<dbReference type="KEGG" id="ath:AT2G45810"/>
<dbReference type="Araport" id="AT2G45810"/>
<dbReference type="TAIR" id="AT2G45810">
    <property type="gene designation" value="RH6"/>
</dbReference>
<dbReference type="eggNOG" id="KOG0326">
    <property type="taxonomic scope" value="Eukaryota"/>
</dbReference>
<dbReference type="HOGENOM" id="CLU_003041_30_0_1"/>
<dbReference type="InParanoid" id="Q94BV4"/>
<dbReference type="OMA" id="EANNQDW"/>
<dbReference type="OrthoDB" id="10265785at2759"/>
<dbReference type="PhylomeDB" id="Q94BV4"/>
<dbReference type="CD-CODE" id="4299E36E">
    <property type="entry name" value="Nucleolus"/>
</dbReference>
<dbReference type="PRO" id="PR:Q94BV4"/>
<dbReference type="Proteomes" id="UP000006548">
    <property type="component" value="Chromosome 2"/>
</dbReference>
<dbReference type="ExpressionAtlas" id="Q94BV4">
    <property type="expression patterns" value="baseline and differential"/>
</dbReference>
<dbReference type="GO" id="GO:0000932">
    <property type="term" value="C:P-body"/>
    <property type="evidence" value="ECO:0007669"/>
    <property type="project" value="UniProtKB-SubCell"/>
</dbReference>
<dbReference type="GO" id="GO:0005524">
    <property type="term" value="F:ATP binding"/>
    <property type="evidence" value="ECO:0007669"/>
    <property type="project" value="UniProtKB-KW"/>
</dbReference>
<dbReference type="GO" id="GO:0016887">
    <property type="term" value="F:ATP hydrolysis activity"/>
    <property type="evidence" value="ECO:0007669"/>
    <property type="project" value="RHEA"/>
</dbReference>
<dbReference type="GO" id="GO:0003729">
    <property type="term" value="F:mRNA binding"/>
    <property type="evidence" value="ECO:0007005"/>
    <property type="project" value="TAIR"/>
</dbReference>
<dbReference type="GO" id="GO:0003724">
    <property type="term" value="F:RNA helicase activity"/>
    <property type="evidence" value="ECO:0007669"/>
    <property type="project" value="UniProtKB-EC"/>
</dbReference>
<dbReference type="GO" id="GO:0006397">
    <property type="term" value="P:mRNA processing"/>
    <property type="evidence" value="ECO:0007669"/>
    <property type="project" value="UniProtKB-KW"/>
</dbReference>
<dbReference type="GO" id="GO:0051028">
    <property type="term" value="P:mRNA transport"/>
    <property type="evidence" value="ECO:0007669"/>
    <property type="project" value="UniProtKB-KW"/>
</dbReference>
<dbReference type="GO" id="GO:0006417">
    <property type="term" value="P:regulation of translation"/>
    <property type="evidence" value="ECO:0007669"/>
    <property type="project" value="UniProtKB-KW"/>
</dbReference>
<dbReference type="CDD" id="cd17940">
    <property type="entry name" value="DEADc_DDX6"/>
    <property type="match status" value="1"/>
</dbReference>
<dbReference type="CDD" id="cd18787">
    <property type="entry name" value="SF2_C_DEAD"/>
    <property type="match status" value="1"/>
</dbReference>
<dbReference type="FunFam" id="3.40.50.300:FF:000114">
    <property type="entry name" value="ATP-dependent RNA helicase DDX6"/>
    <property type="match status" value="1"/>
</dbReference>
<dbReference type="FunFam" id="3.40.50.300:FF:000364">
    <property type="entry name" value="ATP-dependent RNA helicase DDX6"/>
    <property type="match status" value="1"/>
</dbReference>
<dbReference type="Gene3D" id="3.40.50.300">
    <property type="entry name" value="P-loop containing nucleotide triphosphate hydrolases"/>
    <property type="match status" value="2"/>
</dbReference>
<dbReference type="InterPro" id="IPR011545">
    <property type="entry name" value="DEAD/DEAH_box_helicase_dom"/>
</dbReference>
<dbReference type="InterPro" id="IPR014001">
    <property type="entry name" value="Helicase_ATP-bd"/>
</dbReference>
<dbReference type="InterPro" id="IPR001650">
    <property type="entry name" value="Helicase_C-like"/>
</dbReference>
<dbReference type="InterPro" id="IPR027417">
    <property type="entry name" value="P-loop_NTPase"/>
</dbReference>
<dbReference type="InterPro" id="IPR000629">
    <property type="entry name" value="RNA-helicase_DEAD-box_CS"/>
</dbReference>
<dbReference type="InterPro" id="IPR014014">
    <property type="entry name" value="RNA_helicase_DEAD_Q_motif"/>
</dbReference>
<dbReference type="PANTHER" id="PTHR47960">
    <property type="entry name" value="DEAD-BOX ATP-DEPENDENT RNA HELICASE 50"/>
    <property type="match status" value="1"/>
</dbReference>
<dbReference type="Pfam" id="PF00270">
    <property type="entry name" value="DEAD"/>
    <property type="match status" value="1"/>
</dbReference>
<dbReference type="Pfam" id="PF00271">
    <property type="entry name" value="Helicase_C"/>
    <property type="match status" value="1"/>
</dbReference>
<dbReference type="SMART" id="SM00487">
    <property type="entry name" value="DEXDc"/>
    <property type="match status" value="1"/>
</dbReference>
<dbReference type="SMART" id="SM00490">
    <property type="entry name" value="HELICc"/>
    <property type="match status" value="1"/>
</dbReference>
<dbReference type="SUPFAM" id="SSF52540">
    <property type="entry name" value="P-loop containing nucleoside triphosphate hydrolases"/>
    <property type="match status" value="1"/>
</dbReference>
<dbReference type="PROSITE" id="PS00039">
    <property type="entry name" value="DEAD_ATP_HELICASE"/>
    <property type="match status" value="1"/>
</dbReference>
<dbReference type="PROSITE" id="PS51192">
    <property type="entry name" value="HELICASE_ATP_BIND_1"/>
    <property type="match status" value="1"/>
</dbReference>
<dbReference type="PROSITE" id="PS51194">
    <property type="entry name" value="HELICASE_CTER"/>
    <property type="match status" value="1"/>
</dbReference>
<dbReference type="PROSITE" id="PS51195">
    <property type="entry name" value="Q_MOTIF"/>
    <property type="match status" value="1"/>
</dbReference>
<gene>
    <name type="primary">RH6</name>
    <name type="ordered locus">At2g45810</name>
    <name type="ORF">F4I18.21</name>
</gene>
<organism>
    <name type="scientific">Arabidopsis thaliana</name>
    <name type="common">Mouse-ear cress</name>
    <dbReference type="NCBI Taxonomy" id="3702"/>
    <lineage>
        <taxon>Eukaryota</taxon>
        <taxon>Viridiplantae</taxon>
        <taxon>Streptophyta</taxon>
        <taxon>Embryophyta</taxon>
        <taxon>Tracheophyta</taxon>
        <taxon>Spermatophyta</taxon>
        <taxon>Magnoliopsida</taxon>
        <taxon>eudicotyledons</taxon>
        <taxon>Gunneridae</taxon>
        <taxon>Pentapetalae</taxon>
        <taxon>rosids</taxon>
        <taxon>malvids</taxon>
        <taxon>Brassicales</taxon>
        <taxon>Brassicaceae</taxon>
        <taxon>Camelineae</taxon>
        <taxon>Arabidopsis</taxon>
    </lineage>
</organism>
<accession>Q94BV4</accession>
<accession>O80838</accession>
<accession>Q9SB95</accession>
<protein>
    <recommendedName>
        <fullName>DEAD-box ATP-dependent RNA helicase 6</fullName>
        <ecNumber>3.6.4.13</ecNumber>
    </recommendedName>
</protein>
<keyword id="KW-0067">ATP-binding</keyword>
<keyword id="KW-0963">Cytoplasm</keyword>
<keyword id="KW-0347">Helicase</keyword>
<keyword id="KW-0378">Hydrolase</keyword>
<keyword id="KW-0507">mRNA processing</keyword>
<keyword id="KW-0509">mRNA transport</keyword>
<keyword id="KW-0547">Nucleotide-binding</keyword>
<keyword id="KW-0597">Phosphoprotein</keyword>
<keyword id="KW-1185">Reference proteome</keyword>
<keyword id="KW-0694">RNA-binding</keyword>
<keyword id="KW-0810">Translation regulation</keyword>
<keyword id="KW-0813">Transport</keyword>
<reference key="1">
    <citation type="journal article" date="1999" name="Nature">
        <title>Sequence and analysis of chromosome 2 of the plant Arabidopsis thaliana.</title>
        <authorList>
            <person name="Lin X."/>
            <person name="Kaul S."/>
            <person name="Rounsley S.D."/>
            <person name="Shea T.P."/>
            <person name="Benito M.-I."/>
            <person name="Town C.D."/>
            <person name="Fujii C.Y."/>
            <person name="Mason T.M."/>
            <person name="Bowman C.L."/>
            <person name="Barnstead M.E."/>
            <person name="Feldblyum T.V."/>
            <person name="Buell C.R."/>
            <person name="Ketchum K.A."/>
            <person name="Lee J.J."/>
            <person name="Ronning C.M."/>
            <person name="Koo H.L."/>
            <person name="Moffat K.S."/>
            <person name="Cronin L.A."/>
            <person name="Shen M."/>
            <person name="Pai G."/>
            <person name="Van Aken S."/>
            <person name="Umayam L."/>
            <person name="Tallon L.J."/>
            <person name="Gill J.E."/>
            <person name="Adams M.D."/>
            <person name="Carrera A.J."/>
            <person name="Creasy T.H."/>
            <person name="Goodman H.M."/>
            <person name="Somerville C.R."/>
            <person name="Copenhaver G.P."/>
            <person name="Preuss D."/>
            <person name="Nierman W.C."/>
            <person name="White O."/>
            <person name="Eisen J.A."/>
            <person name="Salzberg S.L."/>
            <person name="Fraser C.M."/>
            <person name="Venter J.C."/>
        </authorList>
    </citation>
    <scope>NUCLEOTIDE SEQUENCE [LARGE SCALE GENOMIC DNA]</scope>
    <source>
        <strain>cv. Columbia</strain>
    </source>
</reference>
<reference key="2">
    <citation type="journal article" date="2017" name="Plant J.">
        <title>Araport11: a complete reannotation of the Arabidopsis thaliana reference genome.</title>
        <authorList>
            <person name="Cheng C.Y."/>
            <person name="Krishnakumar V."/>
            <person name="Chan A.P."/>
            <person name="Thibaud-Nissen F."/>
            <person name="Schobel S."/>
            <person name="Town C.D."/>
        </authorList>
    </citation>
    <scope>GENOME REANNOTATION</scope>
    <source>
        <strain>cv. Columbia</strain>
    </source>
</reference>
<reference key="3">
    <citation type="journal article" date="2003" name="Science">
        <title>Empirical analysis of transcriptional activity in the Arabidopsis genome.</title>
        <authorList>
            <person name="Yamada K."/>
            <person name="Lim J."/>
            <person name="Dale J.M."/>
            <person name="Chen H."/>
            <person name="Shinn P."/>
            <person name="Palm C.J."/>
            <person name="Southwick A.M."/>
            <person name="Wu H.C."/>
            <person name="Kim C.J."/>
            <person name="Nguyen M."/>
            <person name="Pham P.K."/>
            <person name="Cheuk R.F."/>
            <person name="Karlin-Newmann G."/>
            <person name="Liu S.X."/>
            <person name="Lam B."/>
            <person name="Sakano H."/>
            <person name="Wu T."/>
            <person name="Yu G."/>
            <person name="Miranda M."/>
            <person name="Quach H.L."/>
            <person name="Tripp M."/>
            <person name="Chang C.H."/>
            <person name="Lee J.M."/>
            <person name="Toriumi M.J."/>
            <person name="Chan M.M."/>
            <person name="Tang C.C."/>
            <person name="Onodera C.S."/>
            <person name="Deng J.M."/>
            <person name="Akiyama K."/>
            <person name="Ansari Y."/>
            <person name="Arakawa T."/>
            <person name="Banh J."/>
            <person name="Banno F."/>
            <person name="Bowser L."/>
            <person name="Brooks S.Y."/>
            <person name="Carninci P."/>
            <person name="Chao Q."/>
            <person name="Choy N."/>
            <person name="Enju A."/>
            <person name="Goldsmith A.D."/>
            <person name="Gurjal M."/>
            <person name="Hansen N.F."/>
            <person name="Hayashizaki Y."/>
            <person name="Johnson-Hopson C."/>
            <person name="Hsuan V.W."/>
            <person name="Iida K."/>
            <person name="Karnes M."/>
            <person name="Khan S."/>
            <person name="Koesema E."/>
            <person name="Ishida J."/>
            <person name="Jiang P.X."/>
            <person name="Jones T."/>
            <person name="Kawai J."/>
            <person name="Kamiya A."/>
            <person name="Meyers C."/>
            <person name="Nakajima M."/>
            <person name="Narusaka M."/>
            <person name="Seki M."/>
            <person name="Sakurai T."/>
            <person name="Satou M."/>
            <person name="Tamse R."/>
            <person name="Vaysberg M."/>
            <person name="Wallender E.K."/>
            <person name="Wong C."/>
            <person name="Yamamura Y."/>
            <person name="Yuan S."/>
            <person name="Shinozaki K."/>
            <person name="Davis R.W."/>
            <person name="Theologis A."/>
            <person name="Ecker J.R."/>
        </authorList>
    </citation>
    <scope>NUCLEOTIDE SEQUENCE [LARGE SCALE MRNA]</scope>
    <source>
        <strain>cv. Columbia</strain>
    </source>
</reference>
<reference key="4">
    <citation type="journal article" date="1999" name="Nucleic Acids Res.">
        <title>The DEAD box RNA helicase family in Arabidopsis thaliana.</title>
        <authorList>
            <person name="Aubourg S."/>
            <person name="Kreis M."/>
            <person name="Lecharny A."/>
        </authorList>
    </citation>
    <scope>NUCLEOTIDE SEQUENCE [MRNA] OF 384-528</scope>
    <source>
        <strain>cv. Columbia</strain>
    </source>
</reference>
<reference key="5">
    <citation type="journal article" date="2004" name="Plant Biotechnol. J.">
        <title>DEAD-box RNA helicases in Arabidopsis thaliana: establishing a link between quantitative expression, gene structure and evolution of a family of genes.</title>
        <authorList>
            <person name="Mingam A."/>
            <person name="Toffano-Nioche C."/>
            <person name="Brunaud V."/>
            <person name="Boudet N."/>
            <person name="Kreis M."/>
            <person name="Lecharny A."/>
        </authorList>
    </citation>
    <scope>GENE FAMILY</scope>
    <scope>NOMENCLATURE</scope>
</reference>
<reference key="6">
    <citation type="journal article" date="2013" name="PLoS ONE">
        <title>Genome-wide comparative in silico analysis of the RNA helicase gene family in Zea mays and Glycine max: a comparison with Arabidopsis and Oryza sativa.</title>
        <authorList>
            <person name="Xu R."/>
            <person name="Zhang S."/>
            <person name="Huang J."/>
            <person name="Zheng C."/>
        </authorList>
    </citation>
    <scope>GENE FAMILY</scope>
</reference>
<name>RH6_ARATH</name>
<evidence type="ECO:0000250" key="1"/>
<evidence type="ECO:0000250" key="2">
    <source>
        <dbReference type="UniProtKB" id="Q9CAI7"/>
    </source>
</evidence>
<evidence type="ECO:0000255" key="3">
    <source>
        <dbReference type="PROSITE-ProRule" id="PRU00541"/>
    </source>
</evidence>
<evidence type="ECO:0000255" key="4">
    <source>
        <dbReference type="PROSITE-ProRule" id="PRU00542"/>
    </source>
</evidence>
<evidence type="ECO:0000256" key="5">
    <source>
        <dbReference type="SAM" id="MobiDB-lite"/>
    </source>
</evidence>
<evidence type="ECO:0000305" key="6"/>
<comment type="function">
    <text evidence="1">ATP-dependent RNA helicase involved in mRNA turnover, and more specifically in mRNA decapping.</text>
</comment>
<comment type="catalytic activity">
    <reaction>
        <text>ATP + H2O = ADP + phosphate + H(+)</text>
        <dbReference type="Rhea" id="RHEA:13065"/>
        <dbReference type="ChEBI" id="CHEBI:15377"/>
        <dbReference type="ChEBI" id="CHEBI:15378"/>
        <dbReference type="ChEBI" id="CHEBI:30616"/>
        <dbReference type="ChEBI" id="CHEBI:43474"/>
        <dbReference type="ChEBI" id="CHEBI:456216"/>
        <dbReference type="EC" id="3.6.4.13"/>
    </reaction>
</comment>
<comment type="subcellular location">
    <subcellularLocation>
        <location evidence="1">Cytoplasm</location>
        <location evidence="1">P-body</location>
    </subcellularLocation>
    <text evidence="1">Is concentrated in several cytoplasmic foci called P bodies (or cytoplasmic processing bodies) which represent sites of mRNA decapping and 5' to 3' exonucleotidic decay.</text>
</comment>
<comment type="domain">
    <text>The Q motif is unique to and characteristic of the DEAD box family of RNA helicases and controls ATP binding and hydrolysis.</text>
</comment>
<comment type="similarity">
    <text evidence="6">Belongs to the DEAD box helicase family. DDX6/DHH1 subfamily.</text>
</comment>
<feature type="chain" id="PRO_0000239147" description="DEAD-box ATP-dependent RNA helicase 6">
    <location>
        <begin position="1"/>
        <end position="528"/>
    </location>
</feature>
<feature type="domain" description="Helicase ATP-binding" evidence="3">
    <location>
        <begin position="185"/>
        <end position="355"/>
    </location>
</feature>
<feature type="domain" description="Helicase C-terminal" evidence="4">
    <location>
        <begin position="365"/>
        <end position="525"/>
    </location>
</feature>
<feature type="region of interest" description="Disordered" evidence="5">
    <location>
        <begin position="1"/>
        <end position="80"/>
    </location>
</feature>
<feature type="short sequence motif" description="Q motif">
    <location>
        <begin position="154"/>
        <end position="182"/>
    </location>
</feature>
<feature type="short sequence motif" description="DEAD box">
    <location>
        <begin position="303"/>
        <end position="306"/>
    </location>
</feature>
<feature type="compositionally biased region" description="Low complexity" evidence="5">
    <location>
        <begin position="1"/>
        <end position="15"/>
    </location>
</feature>
<feature type="compositionally biased region" description="Low complexity" evidence="5">
    <location>
        <begin position="65"/>
        <end position="80"/>
    </location>
</feature>
<feature type="binding site" evidence="3">
    <location>
        <begin position="198"/>
        <end position="205"/>
    </location>
    <ligand>
        <name>ATP</name>
        <dbReference type="ChEBI" id="CHEBI:30616"/>
    </ligand>
</feature>
<feature type="modified residue" description="Phosphothreonine" evidence="2">
    <location>
        <position position="260"/>
    </location>
</feature>
<feature type="sequence conflict" description="In Ref. 3; AAK63966/AAO11625." evidence="6" ref="3">
    <original>F</original>
    <variation>L</variation>
    <location>
        <position position="160"/>
    </location>
</feature>
<feature type="sequence conflict" description="In Ref. 4; CAA09198." evidence="6" ref="4">
    <original>TLFSK</original>
    <variation>FYLLQ</variation>
    <location>
        <begin position="384"/>
        <end position="388"/>
    </location>
</feature>
<proteinExistence type="evidence at transcript level"/>